<organism>
    <name type="scientific">Bacillus subtilis (strain 168)</name>
    <dbReference type="NCBI Taxonomy" id="224308"/>
    <lineage>
        <taxon>Bacteria</taxon>
        <taxon>Bacillati</taxon>
        <taxon>Bacillota</taxon>
        <taxon>Bacilli</taxon>
        <taxon>Bacillales</taxon>
        <taxon>Bacillaceae</taxon>
        <taxon>Bacillus</taxon>
    </lineage>
</organism>
<feature type="chain" id="PRO_0000388804" description="Putative tRNA (cytidine(34)-2'-O)-methyltransferase">
    <location>
        <begin position="1"/>
        <end position="160"/>
    </location>
</feature>
<feature type="binding site" evidence="1">
    <location>
        <position position="82"/>
    </location>
    <ligand>
        <name>S-adenosyl-L-methionine</name>
        <dbReference type="ChEBI" id="CHEBI:59789"/>
    </ligand>
</feature>
<feature type="binding site" evidence="1">
    <location>
        <position position="107"/>
    </location>
    <ligand>
        <name>S-adenosyl-L-methionine</name>
        <dbReference type="ChEBI" id="CHEBI:59789"/>
    </ligand>
</feature>
<feature type="binding site" evidence="1">
    <location>
        <position position="128"/>
    </location>
    <ligand>
        <name>S-adenosyl-L-methionine</name>
        <dbReference type="ChEBI" id="CHEBI:59789"/>
    </ligand>
</feature>
<feature type="binding site" evidence="1">
    <location>
        <position position="136"/>
    </location>
    <ligand>
        <name>S-adenosyl-L-methionine</name>
        <dbReference type="ChEBI" id="CHEBI:59789"/>
    </ligand>
</feature>
<proteinExistence type="evidence at protein level"/>
<accession>O31590</accession>
<accession>Q45512</accession>
<gene>
    <name type="primary">cspR</name>
    <name type="synonym">ygaR</name>
    <name type="ordered locus">BSU08930</name>
</gene>
<keyword id="KW-0002">3D-structure</keyword>
<keyword id="KW-0963">Cytoplasm</keyword>
<keyword id="KW-0489">Methyltransferase</keyword>
<keyword id="KW-1185">Reference proteome</keyword>
<keyword id="KW-0949">S-adenosyl-L-methionine</keyword>
<keyword id="KW-0808">Transferase</keyword>
<keyword id="KW-0819">tRNA processing</keyword>
<reference key="1">
    <citation type="submission" date="1996-05" db="EMBL/GenBank/DDBJ databases">
        <authorList>
            <person name="Schroeder K."/>
            <person name="Marahiel M.A."/>
        </authorList>
    </citation>
    <scope>NUCLEOTIDE SEQUENCE [GENOMIC DNA]</scope>
    <source>
        <strain>168 / JH642</strain>
    </source>
</reference>
<reference key="2">
    <citation type="journal article" date="1997" name="Nature">
        <title>The complete genome sequence of the Gram-positive bacterium Bacillus subtilis.</title>
        <authorList>
            <person name="Kunst F."/>
            <person name="Ogasawara N."/>
            <person name="Moszer I."/>
            <person name="Albertini A.M."/>
            <person name="Alloni G."/>
            <person name="Azevedo V."/>
            <person name="Bertero M.G."/>
            <person name="Bessieres P."/>
            <person name="Bolotin A."/>
            <person name="Borchert S."/>
            <person name="Borriss R."/>
            <person name="Boursier L."/>
            <person name="Brans A."/>
            <person name="Braun M."/>
            <person name="Brignell S.C."/>
            <person name="Bron S."/>
            <person name="Brouillet S."/>
            <person name="Bruschi C.V."/>
            <person name="Caldwell B."/>
            <person name="Capuano V."/>
            <person name="Carter N.M."/>
            <person name="Choi S.-K."/>
            <person name="Codani J.-J."/>
            <person name="Connerton I.F."/>
            <person name="Cummings N.J."/>
            <person name="Daniel R.A."/>
            <person name="Denizot F."/>
            <person name="Devine K.M."/>
            <person name="Duesterhoeft A."/>
            <person name="Ehrlich S.D."/>
            <person name="Emmerson P.T."/>
            <person name="Entian K.-D."/>
            <person name="Errington J."/>
            <person name="Fabret C."/>
            <person name="Ferrari E."/>
            <person name="Foulger D."/>
            <person name="Fritz C."/>
            <person name="Fujita M."/>
            <person name="Fujita Y."/>
            <person name="Fuma S."/>
            <person name="Galizzi A."/>
            <person name="Galleron N."/>
            <person name="Ghim S.-Y."/>
            <person name="Glaser P."/>
            <person name="Goffeau A."/>
            <person name="Golightly E.J."/>
            <person name="Grandi G."/>
            <person name="Guiseppi G."/>
            <person name="Guy B.J."/>
            <person name="Haga K."/>
            <person name="Haiech J."/>
            <person name="Harwood C.R."/>
            <person name="Henaut A."/>
            <person name="Hilbert H."/>
            <person name="Holsappel S."/>
            <person name="Hosono S."/>
            <person name="Hullo M.-F."/>
            <person name="Itaya M."/>
            <person name="Jones L.-M."/>
            <person name="Joris B."/>
            <person name="Karamata D."/>
            <person name="Kasahara Y."/>
            <person name="Klaerr-Blanchard M."/>
            <person name="Klein C."/>
            <person name="Kobayashi Y."/>
            <person name="Koetter P."/>
            <person name="Koningstein G."/>
            <person name="Krogh S."/>
            <person name="Kumano M."/>
            <person name="Kurita K."/>
            <person name="Lapidus A."/>
            <person name="Lardinois S."/>
            <person name="Lauber J."/>
            <person name="Lazarevic V."/>
            <person name="Lee S.-M."/>
            <person name="Levine A."/>
            <person name="Liu H."/>
            <person name="Masuda S."/>
            <person name="Mauel C."/>
            <person name="Medigue C."/>
            <person name="Medina N."/>
            <person name="Mellado R.P."/>
            <person name="Mizuno M."/>
            <person name="Moestl D."/>
            <person name="Nakai S."/>
            <person name="Noback M."/>
            <person name="Noone D."/>
            <person name="O'Reilly M."/>
            <person name="Ogawa K."/>
            <person name="Ogiwara A."/>
            <person name="Oudega B."/>
            <person name="Park S.-H."/>
            <person name="Parro V."/>
            <person name="Pohl T.M."/>
            <person name="Portetelle D."/>
            <person name="Porwollik S."/>
            <person name="Prescott A.M."/>
            <person name="Presecan E."/>
            <person name="Pujic P."/>
            <person name="Purnelle B."/>
            <person name="Rapoport G."/>
            <person name="Rey M."/>
            <person name="Reynolds S."/>
            <person name="Rieger M."/>
            <person name="Rivolta C."/>
            <person name="Rocha E."/>
            <person name="Roche B."/>
            <person name="Rose M."/>
            <person name="Sadaie Y."/>
            <person name="Sato T."/>
            <person name="Scanlan E."/>
            <person name="Schleich S."/>
            <person name="Schroeter R."/>
            <person name="Scoffone F."/>
            <person name="Sekiguchi J."/>
            <person name="Sekowska A."/>
            <person name="Seror S.J."/>
            <person name="Serror P."/>
            <person name="Shin B.-S."/>
            <person name="Soldo B."/>
            <person name="Sorokin A."/>
            <person name="Tacconi E."/>
            <person name="Takagi T."/>
            <person name="Takahashi H."/>
            <person name="Takemaru K."/>
            <person name="Takeuchi M."/>
            <person name="Tamakoshi A."/>
            <person name="Tanaka T."/>
            <person name="Terpstra P."/>
            <person name="Tognoni A."/>
            <person name="Tosato V."/>
            <person name="Uchiyama S."/>
            <person name="Vandenbol M."/>
            <person name="Vannier F."/>
            <person name="Vassarotti A."/>
            <person name="Viari A."/>
            <person name="Wambutt R."/>
            <person name="Wedler E."/>
            <person name="Wedler H."/>
            <person name="Weitzenegger T."/>
            <person name="Winters P."/>
            <person name="Wipat A."/>
            <person name="Yamamoto H."/>
            <person name="Yamane K."/>
            <person name="Yasumoto K."/>
            <person name="Yata K."/>
            <person name="Yoshida K."/>
            <person name="Yoshikawa H.-F."/>
            <person name="Zumstein E."/>
            <person name="Yoshikawa H."/>
            <person name="Danchin A."/>
        </authorList>
    </citation>
    <scope>NUCLEOTIDE SEQUENCE [LARGE SCALE GENOMIC DNA]</scope>
    <source>
        <strain>168</strain>
    </source>
</reference>
<reference key="3">
    <citation type="journal article" date="2009" name="Microbiology">
        <title>From a consortium sequence to a unified sequence: the Bacillus subtilis 168 reference genome a decade later.</title>
        <authorList>
            <person name="Barbe V."/>
            <person name="Cruveiller S."/>
            <person name="Kunst F."/>
            <person name="Lenoble P."/>
            <person name="Meurice G."/>
            <person name="Sekowska A."/>
            <person name="Vallenet D."/>
            <person name="Wang T."/>
            <person name="Moszer I."/>
            <person name="Medigue C."/>
            <person name="Danchin A."/>
        </authorList>
    </citation>
    <scope>SEQUENCE REVISION TO 12</scope>
</reference>
<evidence type="ECO:0000255" key="1">
    <source>
        <dbReference type="HAMAP-Rule" id="MF_01885"/>
    </source>
</evidence>
<evidence type="ECO:0000305" key="2"/>
<sequence>MNIVALHVVLYQPEIPANTGNIARTCAATNTTLHLIRPLGFSTDDKMLKRAGLDYWEFVNVVYHDSLEELFEAYKKGKFFFITKFGQQPHTSFDYTDLDEDYFFVFGRETSGLPKDLIQNNMDRCLRLPMTEHVRSLNLSNTAAILVYEALRQQNYRDLK</sequence>
<comment type="function">
    <text evidence="1">Could methylate the ribose at the nucleotide 34 wobble position in tRNA.</text>
</comment>
<comment type="catalytic activity">
    <reaction evidence="1">
        <text>cytidine(34) in tRNA + S-adenosyl-L-methionine = 2'-O-methylcytidine(34) in tRNA + S-adenosyl-L-homocysteine + H(+)</text>
        <dbReference type="Rhea" id="RHEA:43084"/>
        <dbReference type="Rhea" id="RHEA-COMP:10331"/>
        <dbReference type="Rhea" id="RHEA-COMP:10332"/>
        <dbReference type="ChEBI" id="CHEBI:15378"/>
        <dbReference type="ChEBI" id="CHEBI:57856"/>
        <dbReference type="ChEBI" id="CHEBI:59789"/>
        <dbReference type="ChEBI" id="CHEBI:74495"/>
        <dbReference type="ChEBI" id="CHEBI:82748"/>
        <dbReference type="EC" id="2.1.1.207"/>
    </reaction>
</comment>
<comment type="catalytic activity">
    <reaction evidence="1">
        <text>5-carboxymethylaminomethyluridine(34) in tRNA(Leu) + S-adenosyl-L-methionine = 5-carboxymethylaminomethyl-2'-O-methyluridine(34) in tRNA(Leu) + S-adenosyl-L-homocysteine + H(+)</text>
        <dbReference type="Rhea" id="RHEA:43088"/>
        <dbReference type="Rhea" id="RHEA-COMP:10333"/>
        <dbReference type="Rhea" id="RHEA-COMP:10334"/>
        <dbReference type="ChEBI" id="CHEBI:15378"/>
        <dbReference type="ChEBI" id="CHEBI:57856"/>
        <dbReference type="ChEBI" id="CHEBI:59789"/>
        <dbReference type="ChEBI" id="CHEBI:74508"/>
        <dbReference type="ChEBI" id="CHEBI:74511"/>
        <dbReference type="EC" id="2.1.1.207"/>
    </reaction>
</comment>
<comment type="subcellular location">
    <subcellularLocation>
        <location evidence="1">Cytoplasm</location>
    </subcellularLocation>
</comment>
<comment type="similarity">
    <text evidence="1">Belongs to the class IV-like SAM-binding methyltransferase superfamily. RNA methyltransferase TrmH family. TrmL subfamily.</text>
</comment>
<comment type="sequence caution" evidence="2">
    <conflict type="erroneous initiation">
        <sequence resource="EMBL-CDS" id="AAB02738"/>
    </conflict>
    <text>Truncated N-terminus.</text>
</comment>
<protein>
    <recommendedName>
        <fullName evidence="1">Putative tRNA (cytidine(34)-2'-O)-methyltransferase</fullName>
        <ecNumber evidence="1">2.1.1.207</ecNumber>
    </recommendedName>
    <alternativeName>
        <fullName evidence="1">tRNA (cytidine/uridine-2'-O-)-methyltransferase CspR</fullName>
    </alternativeName>
</protein>
<dbReference type="EC" id="2.1.1.207" evidence="1"/>
<dbReference type="EMBL" id="U58864">
    <property type="protein sequence ID" value="AAB02738.1"/>
    <property type="status" value="ALT_INIT"/>
    <property type="molecule type" value="Genomic_DNA"/>
</dbReference>
<dbReference type="EMBL" id="AL009126">
    <property type="protein sequence ID" value="CAB12721.2"/>
    <property type="molecule type" value="Genomic_DNA"/>
</dbReference>
<dbReference type="PDB" id="8W9U">
    <property type="method" value="X-ray"/>
    <property type="resolution" value="1.85 A"/>
    <property type="chains" value="A/B=2-160"/>
</dbReference>
<dbReference type="PDBsum" id="8W9U"/>
<dbReference type="SMR" id="O31590"/>
<dbReference type="FunCoup" id="O31590">
    <property type="interactions" value="284"/>
</dbReference>
<dbReference type="STRING" id="224308.BSU08930"/>
<dbReference type="jPOST" id="O31590"/>
<dbReference type="PaxDb" id="224308-BSU08930"/>
<dbReference type="EnsemblBacteria" id="CAB12721">
    <property type="protein sequence ID" value="CAB12721"/>
    <property type="gene ID" value="BSU_08930"/>
</dbReference>
<dbReference type="GeneID" id="939735"/>
<dbReference type="KEGG" id="bsu:BSU08930"/>
<dbReference type="PATRIC" id="fig|224308.43.peg.935"/>
<dbReference type="eggNOG" id="COG0219">
    <property type="taxonomic scope" value="Bacteria"/>
</dbReference>
<dbReference type="InParanoid" id="O31590"/>
<dbReference type="OrthoDB" id="9789043at2"/>
<dbReference type="PhylomeDB" id="O31590"/>
<dbReference type="BioCyc" id="BSUB:BSU08930-MONOMER"/>
<dbReference type="Proteomes" id="UP000001570">
    <property type="component" value="Chromosome"/>
</dbReference>
<dbReference type="GO" id="GO:0005737">
    <property type="term" value="C:cytoplasm"/>
    <property type="evidence" value="ECO:0007669"/>
    <property type="project" value="UniProtKB-SubCell"/>
</dbReference>
<dbReference type="GO" id="GO:0003723">
    <property type="term" value="F:RNA binding"/>
    <property type="evidence" value="ECO:0007669"/>
    <property type="project" value="InterPro"/>
</dbReference>
<dbReference type="GO" id="GO:0141102">
    <property type="term" value="F:tRNA (5-carboxymethylaminomethyluridine(34)-2'-O)-methyltransferase activity"/>
    <property type="evidence" value="ECO:0007669"/>
    <property type="project" value="RHEA"/>
</dbReference>
<dbReference type="GO" id="GO:0141098">
    <property type="term" value="F:tRNA (cytidine(34)-2'-O)-methyltransferase activity"/>
    <property type="evidence" value="ECO:0007669"/>
    <property type="project" value="RHEA"/>
</dbReference>
<dbReference type="GO" id="GO:0002130">
    <property type="term" value="P:wobble position ribose methylation"/>
    <property type="evidence" value="ECO:0000318"/>
    <property type="project" value="GO_Central"/>
</dbReference>
<dbReference type="CDD" id="cd18094">
    <property type="entry name" value="SpoU-like_TrmL"/>
    <property type="match status" value="1"/>
</dbReference>
<dbReference type="FunFam" id="3.40.1280.10:FF:000002">
    <property type="entry name" value="Peptidylprolyl isomerase"/>
    <property type="match status" value="1"/>
</dbReference>
<dbReference type="Gene3D" id="3.40.1280.10">
    <property type="match status" value="1"/>
</dbReference>
<dbReference type="HAMAP" id="MF_01885">
    <property type="entry name" value="tRNA_methyltr_TrmL"/>
    <property type="match status" value="1"/>
</dbReference>
<dbReference type="InterPro" id="IPR029028">
    <property type="entry name" value="Alpha/beta_knot_MTases"/>
</dbReference>
<dbReference type="InterPro" id="IPR001537">
    <property type="entry name" value="SpoU_MeTrfase"/>
</dbReference>
<dbReference type="InterPro" id="IPR016914">
    <property type="entry name" value="TrmL"/>
</dbReference>
<dbReference type="InterPro" id="IPR029026">
    <property type="entry name" value="tRNA_m1G_MTases_N"/>
</dbReference>
<dbReference type="NCBIfam" id="TIGR00185">
    <property type="entry name" value="tRNA_yibK_trmL"/>
    <property type="match status" value="1"/>
</dbReference>
<dbReference type="PANTHER" id="PTHR42971">
    <property type="entry name" value="TRNA (CYTIDINE(34)-2'-O)-METHYLTRANSFERASE"/>
    <property type="match status" value="1"/>
</dbReference>
<dbReference type="PANTHER" id="PTHR42971:SF1">
    <property type="entry name" value="TRNA (CYTIDINE(34)-2'-O)-METHYLTRANSFERASE"/>
    <property type="match status" value="1"/>
</dbReference>
<dbReference type="Pfam" id="PF00588">
    <property type="entry name" value="SpoU_methylase"/>
    <property type="match status" value="1"/>
</dbReference>
<dbReference type="PIRSF" id="PIRSF029256">
    <property type="entry name" value="SpoU_TrmH_prd"/>
    <property type="match status" value="1"/>
</dbReference>
<dbReference type="SUPFAM" id="SSF75217">
    <property type="entry name" value="alpha/beta knot"/>
    <property type="match status" value="1"/>
</dbReference>
<name>TRML_BACSU</name>